<keyword id="KW-0496">Mitochondrion</keyword>
<keyword id="KW-1185">Reference proteome</keyword>
<keyword id="KW-0687">Ribonucleoprotein</keyword>
<keyword id="KW-0689">Ribosomal protein</keyword>
<keyword id="KW-0809">Transit peptide</keyword>
<dbReference type="EMBL" id="BC102378">
    <property type="protein sequence ID" value="AAI02379.1"/>
    <property type="molecule type" value="mRNA"/>
</dbReference>
<dbReference type="RefSeq" id="NP_001103650.1">
    <property type="nucleotide sequence ID" value="NM_001110180.2"/>
</dbReference>
<dbReference type="SMR" id="P0C2B7"/>
<dbReference type="FunCoup" id="P0C2B7">
    <property type="interactions" value="599"/>
</dbReference>
<dbReference type="STRING" id="9913.ENSBTAP00000019738"/>
<dbReference type="PaxDb" id="9913-ENSBTAP00000019738"/>
<dbReference type="GeneID" id="509469"/>
<dbReference type="KEGG" id="bta:509469"/>
<dbReference type="CTD" id="122704"/>
<dbReference type="eggNOG" id="ENOG502S4I0">
    <property type="taxonomic scope" value="Eukaryota"/>
</dbReference>
<dbReference type="HOGENOM" id="CLU_135844_0_0_1"/>
<dbReference type="InParanoid" id="P0C2B7"/>
<dbReference type="OrthoDB" id="10249237at2759"/>
<dbReference type="TreeFam" id="TF323872"/>
<dbReference type="Proteomes" id="UP000009136">
    <property type="component" value="Unplaced"/>
</dbReference>
<dbReference type="GO" id="GO:0005743">
    <property type="term" value="C:mitochondrial inner membrane"/>
    <property type="evidence" value="ECO:0000304"/>
    <property type="project" value="Reactome"/>
</dbReference>
<dbReference type="GO" id="GO:0005762">
    <property type="term" value="C:mitochondrial large ribosomal subunit"/>
    <property type="evidence" value="ECO:0000314"/>
    <property type="project" value="UniProtKB"/>
</dbReference>
<dbReference type="GO" id="GO:0003735">
    <property type="term" value="F:structural constituent of ribosome"/>
    <property type="evidence" value="ECO:0000314"/>
    <property type="project" value="UniProtKB"/>
</dbReference>
<dbReference type="GO" id="GO:0032543">
    <property type="term" value="P:mitochondrial translation"/>
    <property type="evidence" value="ECO:0007669"/>
    <property type="project" value="InterPro"/>
</dbReference>
<dbReference type="GO" id="GO:0006412">
    <property type="term" value="P:translation"/>
    <property type="evidence" value="ECO:0000314"/>
    <property type="project" value="UniProtKB"/>
</dbReference>
<dbReference type="InterPro" id="IPR034596">
    <property type="entry name" value="Ribosomal_mL52"/>
</dbReference>
<dbReference type="PANTHER" id="PTHR34090">
    <property type="entry name" value="39S RIBOSOMAL PROTEIN L52, MITOCHONDRIAL"/>
    <property type="match status" value="1"/>
</dbReference>
<dbReference type="PANTHER" id="PTHR34090:SF1">
    <property type="entry name" value="LARGE RIBOSOMAL SUBUNIT PROTEIN ML52"/>
    <property type="match status" value="1"/>
</dbReference>
<dbReference type="Pfam" id="PF18699">
    <property type="entry name" value="MRPL52"/>
    <property type="match status" value="1"/>
</dbReference>
<accession>P0C2B7</accession>
<accession>A8YXY0</accession>
<reference key="1">
    <citation type="submission" date="2006-03" db="EMBL/GenBank/DDBJ databases">
        <authorList>
            <consortium name="NIH - Mammalian Gene Collection (MGC) project"/>
        </authorList>
    </citation>
    <scope>NUCLEOTIDE SEQUENCE [LARGE SCALE MRNA]</scope>
    <source>
        <strain>Crossbred X Angus</strain>
        <tissue>Ileum</tissue>
    </source>
</reference>
<reference key="2">
    <citation type="journal article" date="2001" name="J. Biol. Chem.">
        <title>The large subunit of the mammalian mitochondrial ribosome. Analysis of the complement of ribosomal proteins present.</title>
        <authorList>
            <person name="Koc E.C."/>
            <person name="Burkhart W."/>
            <person name="Blackburn K."/>
            <person name="Moyer M.B."/>
            <person name="Schlatzer D.M."/>
            <person name="Moseley A."/>
            <person name="Spremulli L.L."/>
        </authorList>
    </citation>
    <scope>IDENTIFICATION BY MASS SPECTROMETRY</scope>
    <scope>IDENTIFICATION IN THE 39S MITOCHONDRIAL RIBOSOME</scope>
    <scope>SUBCELLULAR LOCATION</scope>
</reference>
<proteinExistence type="evidence at protein level"/>
<comment type="subunit">
    <text evidence="3">Component of the mitochondrial ribosome large subunit (39S) which comprises a 16S rRNA and about 50 distinct proteins.</text>
</comment>
<comment type="subcellular location">
    <subcellularLocation>
        <location evidence="3">Mitochondrion</location>
    </subcellularLocation>
</comment>
<comment type="similarity">
    <text evidence="4">Belongs to the mitochondrion-specific ribosomal protein mL52 family.</text>
</comment>
<protein>
    <recommendedName>
        <fullName evidence="4">Large ribosomal subunit protein mL52</fullName>
    </recommendedName>
    <alternativeName>
        <fullName>39S ribosomal protein L52, mitochondrial</fullName>
        <shortName>L52mt</shortName>
        <shortName>MRP-L52</shortName>
    </alternativeName>
</protein>
<feature type="transit peptide" description="Mitochondrion" evidence="1">
    <location>
        <begin position="1"/>
        <end position="23"/>
    </location>
</feature>
<feature type="chain" id="PRO_0000273092" description="Large ribosomal subunit protein mL52">
    <location>
        <begin position="24"/>
        <end position="124"/>
    </location>
</feature>
<feature type="region of interest" description="Disordered" evidence="2">
    <location>
        <begin position="99"/>
        <end position="124"/>
    </location>
</feature>
<gene>
    <name type="primary">MRPL52</name>
</gene>
<evidence type="ECO:0000255" key="1"/>
<evidence type="ECO:0000256" key="2">
    <source>
        <dbReference type="SAM" id="MobiDB-lite"/>
    </source>
</evidence>
<evidence type="ECO:0000269" key="3">
    <source>
    </source>
</evidence>
<evidence type="ECO:0000305" key="4"/>
<organism>
    <name type="scientific">Bos taurus</name>
    <name type="common">Bovine</name>
    <dbReference type="NCBI Taxonomy" id="9913"/>
    <lineage>
        <taxon>Eukaryota</taxon>
        <taxon>Metazoa</taxon>
        <taxon>Chordata</taxon>
        <taxon>Craniata</taxon>
        <taxon>Vertebrata</taxon>
        <taxon>Euteleostomi</taxon>
        <taxon>Mammalia</taxon>
        <taxon>Eutheria</taxon>
        <taxon>Laurasiatheria</taxon>
        <taxon>Artiodactyla</taxon>
        <taxon>Ruminantia</taxon>
        <taxon>Pecora</taxon>
        <taxon>Bovidae</taxon>
        <taxon>Bovinae</taxon>
        <taxon>Bos</taxon>
    </lineage>
</organism>
<sequence>MAALGMLLSTGVRRLHCGSAARAGSQWRLRQGLAANPSGYGPLTELPDWSYADGRPAPPMKGQLRRKAQREKFARRVVLLSQEMDAGLQAWQLRQQEKLQEEKRKQQNALKPKGVLLQNPGPSQ</sequence>
<name>RM52_BOVIN</name>